<name>PHNC_YERPE</name>
<gene>
    <name evidence="1" type="primary">phnC</name>
    <name type="ordered locus">YPO1182</name>
    <name type="ordered locus">y3007</name>
    <name type="ordered locus">YP_0954</name>
</gene>
<comment type="function">
    <text evidence="1">Part of the ABC transporter complex PhnCDE involved in phosphonates import. Responsible for energy coupling to the transport system.</text>
</comment>
<comment type="catalytic activity">
    <reaction evidence="1">
        <text>phosphonate(out) + ATP + H2O = phosphonate(in) + ADP + phosphate + H(+)</text>
        <dbReference type="Rhea" id="RHEA:18065"/>
        <dbReference type="ChEBI" id="CHEBI:15377"/>
        <dbReference type="ChEBI" id="CHEBI:15378"/>
        <dbReference type="ChEBI" id="CHEBI:16215"/>
        <dbReference type="ChEBI" id="CHEBI:30616"/>
        <dbReference type="ChEBI" id="CHEBI:43474"/>
        <dbReference type="ChEBI" id="CHEBI:456216"/>
        <dbReference type="EC" id="7.3.2.2"/>
    </reaction>
</comment>
<comment type="subunit">
    <text evidence="1">The complex is composed of two ATP-binding proteins (PhnC), two transmembrane proteins (PhnE) and a solute-binding protein (PhnD).</text>
</comment>
<comment type="subcellular location">
    <subcellularLocation>
        <location evidence="1">Cell inner membrane</location>
        <topology evidence="1">Peripheral membrane protein</topology>
    </subcellularLocation>
</comment>
<comment type="similarity">
    <text evidence="1">Belongs to the ABC transporter superfamily. Phosphonates importer (TC 3.A.1.9.1) family.</text>
</comment>
<comment type="sequence caution" evidence="2">
    <conflict type="erroneous initiation">
        <sequence resource="EMBL-CDS" id="AAM86558"/>
    </conflict>
</comment>
<comment type="sequence caution" evidence="2">
    <conflict type="erroneous initiation">
        <sequence resource="EMBL-CDS" id="AAS61208"/>
    </conflict>
</comment>
<keyword id="KW-0067">ATP-binding</keyword>
<keyword id="KW-0997">Cell inner membrane</keyword>
<keyword id="KW-1003">Cell membrane</keyword>
<keyword id="KW-0472">Membrane</keyword>
<keyword id="KW-0547">Nucleotide-binding</keyword>
<keyword id="KW-0918">Phosphonate transport</keyword>
<keyword id="KW-1185">Reference proteome</keyword>
<keyword id="KW-1278">Translocase</keyword>
<keyword id="KW-0813">Transport</keyword>
<organism>
    <name type="scientific">Yersinia pestis</name>
    <dbReference type="NCBI Taxonomy" id="632"/>
    <lineage>
        <taxon>Bacteria</taxon>
        <taxon>Pseudomonadati</taxon>
        <taxon>Pseudomonadota</taxon>
        <taxon>Gammaproteobacteria</taxon>
        <taxon>Enterobacterales</taxon>
        <taxon>Yersiniaceae</taxon>
        <taxon>Yersinia</taxon>
    </lineage>
</organism>
<accession>Q8ZGU5</accession>
<accession>Q0WHL8</accession>
<accession>Q74WC2</accession>
<accession>Q8D005</accession>
<protein>
    <recommendedName>
        <fullName evidence="1">Phosphonates import ATP-binding protein PhnC</fullName>
        <ecNumber evidence="1">7.3.2.2</ecNumber>
    </recommendedName>
</protein>
<proteinExistence type="inferred from homology"/>
<reference key="1">
    <citation type="journal article" date="2001" name="Nature">
        <title>Genome sequence of Yersinia pestis, the causative agent of plague.</title>
        <authorList>
            <person name="Parkhill J."/>
            <person name="Wren B.W."/>
            <person name="Thomson N.R."/>
            <person name="Titball R.W."/>
            <person name="Holden M.T.G."/>
            <person name="Prentice M.B."/>
            <person name="Sebaihia M."/>
            <person name="James K.D."/>
            <person name="Churcher C.M."/>
            <person name="Mungall K.L."/>
            <person name="Baker S."/>
            <person name="Basham D."/>
            <person name="Bentley S.D."/>
            <person name="Brooks K."/>
            <person name="Cerdeno-Tarraga A.-M."/>
            <person name="Chillingworth T."/>
            <person name="Cronin A."/>
            <person name="Davies R.M."/>
            <person name="Davis P."/>
            <person name="Dougan G."/>
            <person name="Feltwell T."/>
            <person name="Hamlin N."/>
            <person name="Holroyd S."/>
            <person name="Jagels K."/>
            <person name="Karlyshev A.V."/>
            <person name="Leather S."/>
            <person name="Moule S."/>
            <person name="Oyston P.C.F."/>
            <person name="Quail M.A."/>
            <person name="Rutherford K.M."/>
            <person name="Simmonds M."/>
            <person name="Skelton J."/>
            <person name="Stevens K."/>
            <person name="Whitehead S."/>
            <person name="Barrell B.G."/>
        </authorList>
    </citation>
    <scope>NUCLEOTIDE SEQUENCE [LARGE SCALE GENOMIC DNA]</scope>
    <source>
        <strain>CO-92 / Biovar Orientalis</strain>
    </source>
</reference>
<reference key="2">
    <citation type="journal article" date="2002" name="J. Bacteriol.">
        <title>Genome sequence of Yersinia pestis KIM.</title>
        <authorList>
            <person name="Deng W."/>
            <person name="Burland V."/>
            <person name="Plunkett G. III"/>
            <person name="Boutin A."/>
            <person name="Mayhew G.F."/>
            <person name="Liss P."/>
            <person name="Perna N.T."/>
            <person name="Rose D.J."/>
            <person name="Mau B."/>
            <person name="Zhou S."/>
            <person name="Schwartz D.C."/>
            <person name="Fetherston J.D."/>
            <person name="Lindler L.E."/>
            <person name="Brubaker R.R."/>
            <person name="Plano G.V."/>
            <person name="Straley S.C."/>
            <person name="McDonough K.A."/>
            <person name="Nilles M.L."/>
            <person name="Matson J.S."/>
            <person name="Blattner F.R."/>
            <person name="Perry R.D."/>
        </authorList>
    </citation>
    <scope>NUCLEOTIDE SEQUENCE [LARGE SCALE GENOMIC DNA]</scope>
    <source>
        <strain>KIM10+ / Biovar Mediaevalis</strain>
    </source>
</reference>
<reference key="3">
    <citation type="journal article" date="2004" name="DNA Res.">
        <title>Complete genome sequence of Yersinia pestis strain 91001, an isolate avirulent to humans.</title>
        <authorList>
            <person name="Song Y."/>
            <person name="Tong Z."/>
            <person name="Wang J."/>
            <person name="Wang L."/>
            <person name="Guo Z."/>
            <person name="Han Y."/>
            <person name="Zhang J."/>
            <person name="Pei D."/>
            <person name="Zhou D."/>
            <person name="Qin H."/>
            <person name="Pang X."/>
            <person name="Han Y."/>
            <person name="Zhai J."/>
            <person name="Li M."/>
            <person name="Cui B."/>
            <person name="Qi Z."/>
            <person name="Jin L."/>
            <person name="Dai R."/>
            <person name="Chen F."/>
            <person name="Li S."/>
            <person name="Ye C."/>
            <person name="Du Z."/>
            <person name="Lin W."/>
            <person name="Wang J."/>
            <person name="Yu J."/>
            <person name="Yang H."/>
            <person name="Wang J."/>
            <person name="Huang P."/>
            <person name="Yang R."/>
        </authorList>
    </citation>
    <scope>NUCLEOTIDE SEQUENCE [LARGE SCALE GENOMIC DNA]</scope>
    <source>
        <strain>91001 / Biovar Mediaevalis</strain>
    </source>
</reference>
<feature type="chain" id="PRO_0000092739" description="Phosphonates import ATP-binding protein PhnC">
    <location>
        <begin position="1"/>
        <end position="278"/>
    </location>
</feature>
<feature type="domain" description="ABC transporter" evidence="1">
    <location>
        <begin position="25"/>
        <end position="273"/>
    </location>
</feature>
<feature type="binding site" evidence="1">
    <location>
        <begin position="58"/>
        <end position="65"/>
    </location>
    <ligand>
        <name>ATP</name>
        <dbReference type="ChEBI" id="CHEBI:30616"/>
    </ligand>
</feature>
<dbReference type="EC" id="7.3.2.2" evidence="1"/>
<dbReference type="EMBL" id="AL590842">
    <property type="protein sequence ID" value="CAL19846.1"/>
    <property type="molecule type" value="Genomic_DNA"/>
</dbReference>
<dbReference type="EMBL" id="AE009952">
    <property type="protein sequence ID" value="AAM86558.1"/>
    <property type="status" value="ALT_INIT"/>
    <property type="molecule type" value="Genomic_DNA"/>
</dbReference>
<dbReference type="EMBL" id="AE017042">
    <property type="protein sequence ID" value="AAS61208.1"/>
    <property type="status" value="ALT_INIT"/>
    <property type="molecule type" value="Genomic_DNA"/>
</dbReference>
<dbReference type="PIR" id="AD0145">
    <property type="entry name" value="AD0145"/>
</dbReference>
<dbReference type="RefSeq" id="WP_002210787.1">
    <property type="nucleotide sequence ID" value="NZ_WUCM01000017.1"/>
</dbReference>
<dbReference type="RefSeq" id="YP_002346220.1">
    <property type="nucleotide sequence ID" value="NC_003143.1"/>
</dbReference>
<dbReference type="SMR" id="Q8ZGU5"/>
<dbReference type="STRING" id="214092.YPO1182"/>
<dbReference type="PaxDb" id="214092-YPO1182"/>
<dbReference type="DNASU" id="1147954"/>
<dbReference type="EnsemblBacteria" id="AAS61208">
    <property type="protein sequence ID" value="AAS61208"/>
    <property type="gene ID" value="YP_0954"/>
</dbReference>
<dbReference type="GeneID" id="57977322"/>
<dbReference type="KEGG" id="ype:YPO1182"/>
<dbReference type="KEGG" id="ypk:y3007"/>
<dbReference type="KEGG" id="ypm:YP_0954"/>
<dbReference type="PATRIC" id="fig|214092.21.peg.1483"/>
<dbReference type="eggNOG" id="COG3638">
    <property type="taxonomic scope" value="Bacteria"/>
</dbReference>
<dbReference type="HOGENOM" id="CLU_000604_1_22_6"/>
<dbReference type="OrthoDB" id="9802264at2"/>
<dbReference type="Proteomes" id="UP000000815">
    <property type="component" value="Chromosome"/>
</dbReference>
<dbReference type="Proteomes" id="UP000001019">
    <property type="component" value="Chromosome"/>
</dbReference>
<dbReference type="Proteomes" id="UP000002490">
    <property type="component" value="Chromosome"/>
</dbReference>
<dbReference type="GO" id="GO:0005886">
    <property type="term" value="C:plasma membrane"/>
    <property type="evidence" value="ECO:0007669"/>
    <property type="project" value="UniProtKB-SubCell"/>
</dbReference>
<dbReference type="GO" id="GO:0015416">
    <property type="term" value="F:ABC-type phosphonate transporter activity"/>
    <property type="evidence" value="ECO:0007669"/>
    <property type="project" value="UniProtKB-EC"/>
</dbReference>
<dbReference type="GO" id="GO:0005524">
    <property type="term" value="F:ATP binding"/>
    <property type="evidence" value="ECO:0007669"/>
    <property type="project" value="UniProtKB-KW"/>
</dbReference>
<dbReference type="GO" id="GO:0016887">
    <property type="term" value="F:ATP hydrolysis activity"/>
    <property type="evidence" value="ECO:0007669"/>
    <property type="project" value="InterPro"/>
</dbReference>
<dbReference type="CDD" id="cd03256">
    <property type="entry name" value="ABC_PhnC_transporter"/>
    <property type="match status" value="1"/>
</dbReference>
<dbReference type="Gene3D" id="3.40.50.300">
    <property type="entry name" value="P-loop containing nucleotide triphosphate hydrolases"/>
    <property type="match status" value="1"/>
</dbReference>
<dbReference type="InterPro" id="IPR003593">
    <property type="entry name" value="AAA+_ATPase"/>
</dbReference>
<dbReference type="InterPro" id="IPR003439">
    <property type="entry name" value="ABC_transporter-like_ATP-bd"/>
</dbReference>
<dbReference type="InterPro" id="IPR017871">
    <property type="entry name" value="ABC_transporter-like_CS"/>
</dbReference>
<dbReference type="InterPro" id="IPR012693">
    <property type="entry name" value="ABC_transpr_PhnC"/>
</dbReference>
<dbReference type="InterPro" id="IPR050086">
    <property type="entry name" value="MetN_ABC_transporter-like"/>
</dbReference>
<dbReference type="InterPro" id="IPR027417">
    <property type="entry name" value="P-loop_NTPase"/>
</dbReference>
<dbReference type="NCBIfam" id="TIGR02315">
    <property type="entry name" value="ABC_phnC"/>
    <property type="match status" value="1"/>
</dbReference>
<dbReference type="PANTHER" id="PTHR43166">
    <property type="entry name" value="AMINO ACID IMPORT ATP-BINDING PROTEIN"/>
    <property type="match status" value="1"/>
</dbReference>
<dbReference type="PANTHER" id="PTHR43166:SF6">
    <property type="entry name" value="PHOSPHONATES IMPORT ATP-BINDING PROTEIN PHNC"/>
    <property type="match status" value="1"/>
</dbReference>
<dbReference type="Pfam" id="PF00005">
    <property type="entry name" value="ABC_tran"/>
    <property type="match status" value="1"/>
</dbReference>
<dbReference type="SMART" id="SM00382">
    <property type="entry name" value="AAA"/>
    <property type="match status" value="1"/>
</dbReference>
<dbReference type="SUPFAM" id="SSF52540">
    <property type="entry name" value="P-loop containing nucleoside triphosphate hydrolases"/>
    <property type="match status" value="1"/>
</dbReference>
<dbReference type="PROSITE" id="PS00211">
    <property type="entry name" value="ABC_TRANSPORTER_1"/>
    <property type="match status" value="1"/>
</dbReference>
<dbReference type="PROSITE" id="PS50893">
    <property type="entry name" value="ABC_TRANSPORTER_2"/>
    <property type="match status" value="1"/>
</dbReference>
<dbReference type="PROSITE" id="PS51249">
    <property type="entry name" value="PHNC"/>
    <property type="match status" value="1"/>
</dbReference>
<sequence length="278" mass="30989">MGQALRKLTAADYPVVVQEPRKKVLAVKGLVKAYKSQHRVLDNINFELHAGEFVAIIGRSGAGKSTLLHILNGTIPTSAGEIINYHENGDTQNIAALTTKQMRKWRAKCGMIFQDFCLVPRLDVITNVLLGRLSYTSTLKSFFKLFSEQDQARAIELLQWLNMLPHALQRAENLSGGQMQRVAICRAMMQNPKILLADEPVASLDPKNTTRIMNTLQKISENDIAVIVNLHSVDLVKDYCTRVIGIAHGRIIFDGPPSMLNDSIIQDIYSDESAELLH</sequence>
<evidence type="ECO:0000255" key="1">
    <source>
        <dbReference type="HAMAP-Rule" id="MF_01713"/>
    </source>
</evidence>
<evidence type="ECO:0000305" key="2"/>